<protein>
    <recommendedName>
        <fullName evidence="1">Protein GrpE</fullName>
    </recommendedName>
    <alternativeName>
        <fullName evidence="1">HSP-70 cofactor</fullName>
    </alternativeName>
</protein>
<gene>
    <name evidence="1" type="primary">grpE</name>
    <name type="ordered locus">mma_2884</name>
</gene>
<keyword id="KW-0143">Chaperone</keyword>
<keyword id="KW-0963">Cytoplasm</keyword>
<keyword id="KW-0346">Stress response</keyword>
<organism>
    <name type="scientific">Janthinobacterium sp. (strain Marseille)</name>
    <name type="common">Minibacterium massiliensis</name>
    <dbReference type="NCBI Taxonomy" id="375286"/>
    <lineage>
        <taxon>Bacteria</taxon>
        <taxon>Pseudomonadati</taxon>
        <taxon>Pseudomonadota</taxon>
        <taxon>Betaproteobacteria</taxon>
        <taxon>Burkholderiales</taxon>
        <taxon>Oxalobacteraceae</taxon>
        <taxon>Janthinobacterium</taxon>
    </lineage>
</organism>
<comment type="function">
    <text evidence="1">Participates actively in the response to hyperosmotic and heat shock by preventing the aggregation of stress-denatured proteins, in association with DnaK and GrpE. It is the nucleotide exchange factor for DnaK and may function as a thermosensor. Unfolded proteins bind initially to DnaJ; upon interaction with the DnaJ-bound protein, DnaK hydrolyzes its bound ATP, resulting in the formation of a stable complex. GrpE releases ADP from DnaK; ATP binding to DnaK triggers the release of the substrate protein, thus completing the reaction cycle. Several rounds of ATP-dependent interactions between DnaJ, DnaK and GrpE are required for fully efficient folding.</text>
</comment>
<comment type="subunit">
    <text evidence="1">Homodimer.</text>
</comment>
<comment type="subcellular location">
    <subcellularLocation>
        <location evidence="1">Cytoplasm</location>
    </subcellularLocation>
</comment>
<comment type="similarity">
    <text evidence="1">Belongs to the GrpE family.</text>
</comment>
<evidence type="ECO:0000255" key="1">
    <source>
        <dbReference type="HAMAP-Rule" id="MF_01151"/>
    </source>
</evidence>
<evidence type="ECO:0000256" key="2">
    <source>
        <dbReference type="SAM" id="MobiDB-lite"/>
    </source>
</evidence>
<proteinExistence type="inferred from homology"/>
<dbReference type="EMBL" id="CP000269">
    <property type="protein sequence ID" value="ABR88293.1"/>
    <property type="molecule type" value="Genomic_DNA"/>
</dbReference>
<dbReference type="RefSeq" id="WP_012080733.1">
    <property type="nucleotide sequence ID" value="NC_009659.1"/>
</dbReference>
<dbReference type="SMR" id="A6T227"/>
<dbReference type="STRING" id="375286.mma_2884"/>
<dbReference type="KEGG" id="mms:mma_2884"/>
<dbReference type="eggNOG" id="COG0576">
    <property type="taxonomic scope" value="Bacteria"/>
</dbReference>
<dbReference type="HOGENOM" id="CLU_057217_6_1_4"/>
<dbReference type="OrthoDB" id="9789811at2"/>
<dbReference type="Proteomes" id="UP000006388">
    <property type="component" value="Chromosome"/>
</dbReference>
<dbReference type="GO" id="GO:0005829">
    <property type="term" value="C:cytosol"/>
    <property type="evidence" value="ECO:0007669"/>
    <property type="project" value="TreeGrafter"/>
</dbReference>
<dbReference type="GO" id="GO:0000774">
    <property type="term" value="F:adenyl-nucleotide exchange factor activity"/>
    <property type="evidence" value="ECO:0007669"/>
    <property type="project" value="InterPro"/>
</dbReference>
<dbReference type="GO" id="GO:0042803">
    <property type="term" value="F:protein homodimerization activity"/>
    <property type="evidence" value="ECO:0007669"/>
    <property type="project" value="InterPro"/>
</dbReference>
<dbReference type="GO" id="GO:0051087">
    <property type="term" value="F:protein-folding chaperone binding"/>
    <property type="evidence" value="ECO:0007669"/>
    <property type="project" value="InterPro"/>
</dbReference>
<dbReference type="GO" id="GO:0051082">
    <property type="term" value="F:unfolded protein binding"/>
    <property type="evidence" value="ECO:0007669"/>
    <property type="project" value="TreeGrafter"/>
</dbReference>
<dbReference type="GO" id="GO:0006457">
    <property type="term" value="P:protein folding"/>
    <property type="evidence" value="ECO:0007669"/>
    <property type="project" value="InterPro"/>
</dbReference>
<dbReference type="CDD" id="cd00446">
    <property type="entry name" value="GrpE"/>
    <property type="match status" value="1"/>
</dbReference>
<dbReference type="Gene3D" id="3.90.20.20">
    <property type="match status" value="1"/>
</dbReference>
<dbReference type="Gene3D" id="2.30.22.10">
    <property type="entry name" value="Head domain of nucleotide exchange factor GrpE"/>
    <property type="match status" value="1"/>
</dbReference>
<dbReference type="HAMAP" id="MF_01151">
    <property type="entry name" value="GrpE"/>
    <property type="match status" value="1"/>
</dbReference>
<dbReference type="InterPro" id="IPR000740">
    <property type="entry name" value="GrpE"/>
</dbReference>
<dbReference type="InterPro" id="IPR013805">
    <property type="entry name" value="GrpE_coiled_coil"/>
</dbReference>
<dbReference type="InterPro" id="IPR009012">
    <property type="entry name" value="GrpE_head"/>
</dbReference>
<dbReference type="NCBIfam" id="NF010737">
    <property type="entry name" value="PRK14139.1"/>
    <property type="match status" value="1"/>
</dbReference>
<dbReference type="NCBIfam" id="NF010738">
    <property type="entry name" value="PRK14140.1"/>
    <property type="match status" value="1"/>
</dbReference>
<dbReference type="NCBIfam" id="NF010748">
    <property type="entry name" value="PRK14150.1"/>
    <property type="match status" value="1"/>
</dbReference>
<dbReference type="PANTHER" id="PTHR21237">
    <property type="entry name" value="GRPE PROTEIN"/>
    <property type="match status" value="1"/>
</dbReference>
<dbReference type="PANTHER" id="PTHR21237:SF23">
    <property type="entry name" value="GRPE PROTEIN HOMOLOG, MITOCHONDRIAL"/>
    <property type="match status" value="1"/>
</dbReference>
<dbReference type="Pfam" id="PF01025">
    <property type="entry name" value="GrpE"/>
    <property type="match status" value="1"/>
</dbReference>
<dbReference type="PRINTS" id="PR00773">
    <property type="entry name" value="GRPEPROTEIN"/>
</dbReference>
<dbReference type="SUPFAM" id="SSF58014">
    <property type="entry name" value="Coiled-coil domain of nucleotide exchange factor GrpE"/>
    <property type="match status" value="1"/>
</dbReference>
<dbReference type="SUPFAM" id="SSF51064">
    <property type="entry name" value="Head domain of nucleotide exchange factor GrpE"/>
    <property type="match status" value="1"/>
</dbReference>
<dbReference type="PROSITE" id="PS01071">
    <property type="entry name" value="GRPE"/>
    <property type="match status" value="1"/>
</dbReference>
<feature type="chain" id="PRO_1000137579" description="Protein GrpE">
    <location>
        <begin position="1"/>
        <end position="179"/>
    </location>
</feature>
<feature type="region of interest" description="Disordered" evidence="2">
    <location>
        <begin position="1"/>
        <end position="29"/>
    </location>
</feature>
<sequence>MQDQDKYAEQAASIEDPVTAEAASATTPTLEEQLAASQLLVQELQDSFLRAKAEVENFRRRAQEDVTRAHKFAIEGFAEMLLPVKDSLEMALQVETPSVESLKEGVEMTLKQLNAAFEKNRLLEIKPQQGDKLDPMKHQAMSLVPADQEPNTVVNTLQKGYLIADRLLRPALVTVAQEK</sequence>
<reference key="1">
    <citation type="journal article" date="2007" name="PLoS Genet.">
        <title>Genome analysis of Minibacterium massiliensis highlights the convergent evolution of water-living bacteria.</title>
        <authorList>
            <person name="Audic S."/>
            <person name="Robert C."/>
            <person name="Campagna B."/>
            <person name="Parinello H."/>
            <person name="Claverie J.-M."/>
            <person name="Raoult D."/>
            <person name="Drancourt M."/>
        </authorList>
    </citation>
    <scope>NUCLEOTIDE SEQUENCE [LARGE SCALE GENOMIC DNA]</scope>
    <source>
        <strain>Marseille</strain>
    </source>
</reference>
<accession>A6T227</accession>
<name>GRPE_JANMA</name>